<proteinExistence type="evidence at protein level"/>
<name>PGK_DROME</name>
<organism evidence="8">
    <name type="scientific">Drosophila melanogaster</name>
    <name type="common">Fruit fly</name>
    <dbReference type="NCBI Taxonomy" id="7227"/>
    <lineage>
        <taxon>Eukaryota</taxon>
        <taxon>Metazoa</taxon>
        <taxon>Ecdysozoa</taxon>
        <taxon>Arthropoda</taxon>
        <taxon>Hexapoda</taxon>
        <taxon>Insecta</taxon>
        <taxon>Pterygota</taxon>
        <taxon>Neoptera</taxon>
        <taxon>Endopterygota</taxon>
        <taxon>Diptera</taxon>
        <taxon>Brachycera</taxon>
        <taxon>Muscomorpha</taxon>
        <taxon>Ephydroidea</taxon>
        <taxon>Drosophilidae</taxon>
        <taxon>Drosophila</taxon>
        <taxon>Sophophora</taxon>
    </lineage>
</organism>
<accession>Q01604</accession>
<accession>A5XCG6</accession>
<accession>Q3KN29</accession>
<accession>Q9VQF6</accession>
<evidence type="ECO:0000250" key="1">
    <source>
        <dbReference type="UniProtKB" id="P00558"/>
    </source>
</evidence>
<evidence type="ECO:0000250" key="2">
    <source>
        <dbReference type="UniProtKB" id="Q7SIB7"/>
    </source>
</evidence>
<evidence type="ECO:0000269" key="3">
    <source>
    </source>
</evidence>
<evidence type="ECO:0000269" key="4">
    <source>
    </source>
</evidence>
<evidence type="ECO:0000305" key="5"/>
<evidence type="ECO:0000305" key="6">
    <source>
    </source>
</evidence>
<evidence type="ECO:0000312" key="7">
    <source>
        <dbReference type="FlyBase" id="FBgn0250906"/>
    </source>
</evidence>
<evidence type="ECO:0000312" key="8">
    <source>
        <dbReference type="Proteomes" id="UP000000803"/>
    </source>
</evidence>
<dbReference type="EC" id="2.7.2.3" evidence="1"/>
<dbReference type="EMBL" id="Z14029">
    <property type="protein sequence ID" value="CAA78404.1"/>
    <property type="molecule type" value="Genomic_DNA"/>
</dbReference>
<dbReference type="EMBL" id="DQ863952">
    <property type="protein sequence ID" value="ABH06587.1"/>
    <property type="molecule type" value="Genomic_DNA"/>
</dbReference>
<dbReference type="EMBL" id="DQ863953">
    <property type="protein sequence ID" value="ABH06588.1"/>
    <property type="molecule type" value="Genomic_DNA"/>
</dbReference>
<dbReference type="EMBL" id="DQ863954">
    <property type="protein sequence ID" value="ABH06589.1"/>
    <property type="molecule type" value="Genomic_DNA"/>
</dbReference>
<dbReference type="EMBL" id="DQ863955">
    <property type="protein sequence ID" value="ABH06590.1"/>
    <property type="molecule type" value="Genomic_DNA"/>
</dbReference>
<dbReference type="EMBL" id="DQ863956">
    <property type="protein sequence ID" value="ABH06591.1"/>
    <property type="molecule type" value="Genomic_DNA"/>
</dbReference>
<dbReference type="EMBL" id="DQ863957">
    <property type="protein sequence ID" value="ABH06592.1"/>
    <property type="molecule type" value="Genomic_DNA"/>
</dbReference>
<dbReference type="EMBL" id="DQ863958">
    <property type="protein sequence ID" value="ABH06593.1"/>
    <property type="molecule type" value="Genomic_DNA"/>
</dbReference>
<dbReference type="EMBL" id="DQ863959">
    <property type="protein sequence ID" value="ABH06594.1"/>
    <property type="molecule type" value="Genomic_DNA"/>
</dbReference>
<dbReference type="EMBL" id="DQ863960">
    <property type="protein sequence ID" value="ABH06595.1"/>
    <property type="molecule type" value="Genomic_DNA"/>
</dbReference>
<dbReference type="EMBL" id="DQ863961">
    <property type="protein sequence ID" value="ABH06596.1"/>
    <property type="molecule type" value="Genomic_DNA"/>
</dbReference>
<dbReference type="EMBL" id="DQ863962">
    <property type="protein sequence ID" value="ABH06597.1"/>
    <property type="molecule type" value="Genomic_DNA"/>
</dbReference>
<dbReference type="EMBL" id="DQ863963">
    <property type="protein sequence ID" value="ABH06598.1"/>
    <property type="molecule type" value="Genomic_DNA"/>
</dbReference>
<dbReference type="EMBL" id="DQ863964">
    <property type="protein sequence ID" value="ABH06599.1"/>
    <property type="molecule type" value="Genomic_DNA"/>
</dbReference>
<dbReference type="EMBL" id="DQ863965">
    <property type="protein sequence ID" value="ABH06600.1"/>
    <property type="molecule type" value="Genomic_DNA"/>
</dbReference>
<dbReference type="EMBL" id="DQ863966">
    <property type="protein sequence ID" value="ABH06601.1"/>
    <property type="molecule type" value="Genomic_DNA"/>
</dbReference>
<dbReference type="EMBL" id="DQ863967">
    <property type="protein sequence ID" value="ABH06602.1"/>
    <property type="molecule type" value="Genomic_DNA"/>
</dbReference>
<dbReference type="EMBL" id="DQ863968">
    <property type="protein sequence ID" value="ABH06603.1"/>
    <property type="molecule type" value="Genomic_DNA"/>
</dbReference>
<dbReference type="EMBL" id="DQ863969">
    <property type="protein sequence ID" value="ABH06604.1"/>
    <property type="molecule type" value="Genomic_DNA"/>
</dbReference>
<dbReference type="EMBL" id="DQ863970">
    <property type="protein sequence ID" value="ABH06605.1"/>
    <property type="molecule type" value="Genomic_DNA"/>
</dbReference>
<dbReference type="EMBL" id="DQ863971">
    <property type="protein sequence ID" value="ABH06606.1"/>
    <property type="molecule type" value="Genomic_DNA"/>
</dbReference>
<dbReference type="EMBL" id="DQ863972">
    <property type="protein sequence ID" value="ABH06607.1"/>
    <property type="molecule type" value="Genomic_DNA"/>
</dbReference>
<dbReference type="EMBL" id="DQ863973">
    <property type="protein sequence ID" value="ABH06608.1"/>
    <property type="molecule type" value="Genomic_DNA"/>
</dbReference>
<dbReference type="EMBL" id="DQ863974">
    <property type="protein sequence ID" value="ABH06609.1"/>
    <property type="molecule type" value="Genomic_DNA"/>
</dbReference>
<dbReference type="EMBL" id="DQ863975">
    <property type="protein sequence ID" value="ABH06610.1"/>
    <property type="molecule type" value="Genomic_DNA"/>
</dbReference>
<dbReference type="EMBL" id="DQ863976">
    <property type="protein sequence ID" value="ABH06611.1"/>
    <property type="molecule type" value="Genomic_DNA"/>
</dbReference>
<dbReference type="EMBL" id="AE014134">
    <property type="protein sequence ID" value="AAF51218.1"/>
    <property type="molecule type" value="Genomic_DNA"/>
</dbReference>
<dbReference type="EMBL" id="BT023910">
    <property type="protein sequence ID" value="ABA81844.1"/>
    <property type="molecule type" value="mRNA"/>
</dbReference>
<dbReference type="PIR" id="S30111">
    <property type="entry name" value="KIFFPG"/>
</dbReference>
<dbReference type="RefSeq" id="NP_001259956.1">
    <property type="nucleotide sequence ID" value="NM_001273027.1"/>
</dbReference>
<dbReference type="RefSeq" id="NP_001259957.1">
    <property type="nucleotide sequence ID" value="NM_001273028.1"/>
</dbReference>
<dbReference type="RefSeq" id="NP_001259958.1">
    <property type="nucleotide sequence ID" value="NM_001273029.1"/>
</dbReference>
<dbReference type="RefSeq" id="NP_001259959.1">
    <property type="nucleotide sequence ID" value="NM_001273030.1"/>
</dbReference>
<dbReference type="RefSeq" id="NP_476676.1">
    <property type="nucleotide sequence ID" value="NM_057328.4"/>
</dbReference>
<dbReference type="SMR" id="Q01604"/>
<dbReference type="BioGRID" id="59686">
    <property type="interactions" value="40"/>
</dbReference>
<dbReference type="FunCoup" id="Q01604">
    <property type="interactions" value="607"/>
</dbReference>
<dbReference type="IntAct" id="Q01604">
    <property type="interactions" value="171"/>
</dbReference>
<dbReference type="STRING" id="7227.FBpp0306279"/>
<dbReference type="PaxDb" id="7227-FBpp0303562"/>
<dbReference type="DNASU" id="33461"/>
<dbReference type="EnsemblMetazoa" id="FBtr0077739">
    <property type="protein sequence ID" value="FBpp0077419"/>
    <property type="gene ID" value="FBgn0250906"/>
</dbReference>
<dbReference type="EnsemblMetazoa" id="FBtr0330716">
    <property type="protein sequence ID" value="FBpp0303560"/>
    <property type="gene ID" value="FBgn0250906"/>
</dbReference>
<dbReference type="EnsemblMetazoa" id="FBtr0330717">
    <property type="protein sequence ID" value="FBpp0303561"/>
    <property type="gene ID" value="FBgn0250906"/>
</dbReference>
<dbReference type="EnsemblMetazoa" id="FBtr0330718">
    <property type="protein sequence ID" value="FBpp0303562"/>
    <property type="gene ID" value="FBgn0250906"/>
</dbReference>
<dbReference type="EnsemblMetazoa" id="FBtr0334162">
    <property type="protein sequence ID" value="FBpp0306279"/>
    <property type="gene ID" value="FBgn0250906"/>
</dbReference>
<dbReference type="GeneID" id="33461"/>
<dbReference type="KEGG" id="dme:Dmel_CG3127"/>
<dbReference type="AGR" id="FB:FBgn0250906"/>
<dbReference type="CTD" id="33461"/>
<dbReference type="FlyBase" id="FBgn0250906">
    <property type="gene designation" value="Pgk"/>
</dbReference>
<dbReference type="VEuPathDB" id="VectorBase:FBgn0250906"/>
<dbReference type="eggNOG" id="KOG1367">
    <property type="taxonomic scope" value="Eukaryota"/>
</dbReference>
<dbReference type="GeneTree" id="ENSGT00390000008820"/>
<dbReference type="HOGENOM" id="CLU_025427_0_0_1"/>
<dbReference type="InParanoid" id="Q01604"/>
<dbReference type="OMA" id="DMIFDIG"/>
<dbReference type="OrthoDB" id="275353at2759"/>
<dbReference type="PhylomeDB" id="Q01604"/>
<dbReference type="Reactome" id="R-DME-70171">
    <property type="pathway name" value="Glycolysis"/>
</dbReference>
<dbReference type="Reactome" id="R-DME-70263">
    <property type="pathway name" value="Gluconeogenesis"/>
</dbReference>
<dbReference type="UniPathway" id="UPA00109">
    <property type="reaction ID" value="UER00185"/>
</dbReference>
<dbReference type="BioGRID-ORCS" id="33461">
    <property type="hits" value="0 hits in 3 CRISPR screens"/>
</dbReference>
<dbReference type="ChiTaRS" id="Pgk">
    <property type="organism name" value="fly"/>
</dbReference>
<dbReference type="GenomeRNAi" id="33461"/>
<dbReference type="PRO" id="PR:Q01604"/>
<dbReference type="Proteomes" id="UP000000803">
    <property type="component" value="Chromosome 2L"/>
</dbReference>
<dbReference type="Bgee" id="FBgn0250906">
    <property type="expression patterns" value="Expressed in adult middle midgut class I enteroendocrine cell in adult midgut (Drosophila) and 262 other cell types or tissues"/>
</dbReference>
<dbReference type="ExpressionAtlas" id="Q01604">
    <property type="expression patterns" value="baseline and differential"/>
</dbReference>
<dbReference type="GO" id="GO:0005829">
    <property type="term" value="C:cytosol"/>
    <property type="evidence" value="ECO:0000250"/>
    <property type="project" value="FlyBase"/>
</dbReference>
<dbReference type="GO" id="GO:0031430">
    <property type="term" value="C:M band"/>
    <property type="evidence" value="ECO:0000314"/>
    <property type="project" value="FlyBase"/>
</dbReference>
<dbReference type="GO" id="GO:0045202">
    <property type="term" value="C:synapse"/>
    <property type="evidence" value="ECO:0007669"/>
    <property type="project" value="GOC"/>
</dbReference>
<dbReference type="GO" id="GO:0030018">
    <property type="term" value="C:Z disc"/>
    <property type="evidence" value="ECO:0000314"/>
    <property type="project" value="FlyBase"/>
</dbReference>
<dbReference type="GO" id="GO:0043531">
    <property type="term" value="F:ADP binding"/>
    <property type="evidence" value="ECO:0000318"/>
    <property type="project" value="GO_Central"/>
</dbReference>
<dbReference type="GO" id="GO:0005524">
    <property type="term" value="F:ATP binding"/>
    <property type="evidence" value="ECO:0000250"/>
    <property type="project" value="UniProtKB"/>
</dbReference>
<dbReference type="GO" id="GO:0046872">
    <property type="term" value="F:metal ion binding"/>
    <property type="evidence" value="ECO:0007669"/>
    <property type="project" value="UniProtKB-KW"/>
</dbReference>
<dbReference type="GO" id="GO:0004618">
    <property type="term" value="F:phosphoglycerate kinase activity"/>
    <property type="evidence" value="ECO:0000250"/>
    <property type="project" value="UniProtKB"/>
</dbReference>
<dbReference type="GO" id="GO:0061621">
    <property type="term" value="P:canonical glycolysis"/>
    <property type="evidence" value="ECO:0000315"/>
    <property type="project" value="FlyBase"/>
</dbReference>
<dbReference type="GO" id="GO:0007268">
    <property type="term" value="P:chemical synaptic transmission"/>
    <property type="evidence" value="ECO:0000314"/>
    <property type="project" value="FlyBase"/>
</dbReference>
<dbReference type="GO" id="GO:0006094">
    <property type="term" value="P:gluconeogenesis"/>
    <property type="evidence" value="ECO:0000250"/>
    <property type="project" value="FlyBase"/>
</dbReference>
<dbReference type="GO" id="GO:0006096">
    <property type="term" value="P:glycolytic process"/>
    <property type="evidence" value="ECO:0000250"/>
    <property type="project" value="FlyBase"/>
</dbReference>
<dbReference type="GO" id="GO:0046716">
    <property type="term" value="P:muscle cell cellular homeostasis"/>
    <property type="evidence" value="ECO:0000316"/>
    <property type="project" value="FlyBase"/>
</dbReference>
<dbReference type="CDD" id="cd00318">
    <property type="entry name" value="Phosphoglycerate_kinase"/>
    <property type="match status" value="1"/>
</dbReference>
<dbReference type="FunFam" id="3.40.50.1260:FF:000019">
    <property type="entry name" value="Phosphoglycerate kinase 1"/>
    <property type="match status" value="1"/>
</dbReference>
<dbReference type="FunFam" id="3.40.50.1260:FF:000031">
    <property type="entry name" value="Phosphoglycerate kinase 1"/>
    <property type="match status" value="1"/>
</dbReference>
<dbReference type="Gene3D" id="3.40.50.1260">
    <property type="entry name" value="Phosphoglycerate kinase, N-terminal domain"/>
    <property type="match status" value="3"/>
</dbReference>
<dbReference type="HAMAP" id="MF_00145">
    <property type="entry name" value="Phosphoglyc_kinase"/>
    <property type="match status" value="1"/>
</dbReference>
<dbReference type="InterPro" id="IPR001576">
    <property type="entry name" value="Phosphoglycerate_kinase"/>
</dbReference>
<dbReference type="InterPro" id="IPR015911">
    <property type="entry name" value="Phosphoglycerate_kinase_CS"/>
</dbReference>
<dbReference type="InterPro" id="IPR015824">
    <property type="entry name" value="Phosphoglycerate_kinase_N"/>
</dbReference>
<dbReference type="InterPro" id="IPR036043">
    <property type="entry name" value="Phosphoglycerate_kinase_sf"/>
</dbReference>
<dbReference type="PANTHER" id="PTHR11406">
    <property type="entry name" value="PHOSPHOGLYCERATE KINASE"/>
    <property type="match status" value="1"/>
</dbReference>
<dbReference type="PANTHER" id="PTHR11406:SF0">
    <property type="entry name" value="PHOSPHOGLYCERATE KINASE"/>
    <property type="match status" value="1"/>
</dbReference>
<dbReference type="Pfam" id="PF00162">
    <property type="entry name" value="PGK"/>
    <property type="match status" value="1"/>
</dbReference>
<dbReference type="PIRSF" id="PIRSF000724">
    <property type="entry name" value="Pgk"/>
    <property type="match status" value="1"/>
</dbReference>
<dbReference type="PRINTS" id="PR00477">
    <property type="entry name" value="PHGLYCKINASE"/>
</dbReference>
<dbReference type="SUPFAM" id="SSF53748">
    <property type="entry name" value="Phosphoglycerate kinase"/>
    <property type="match status" value="1"/>
</dbReference>
<dbReference type="PROSITE" id="PS00111">
    <property type="entry name" value="PGLYCERATE_KINASE"/>
    <property type="match status" value="1"/>
</dbReference>
<comment type="function">
    <text evidence="4 6">Enzyme of the glycolytic pathway (Probable). Glycolysis is essential in glial cells but not in neurons; neurons rely on the citric acid cycle for their energy needs, and on lactate and alanine secreted into the hemolymph by glial cells to fuel it (PubMed:26235423).</text>
</comment>
<comment type="catalytic activity">
    <reaction evidence="1">
        <text>(2R)-3-phosphoglycerate + ATP = (2R)-3-phospho-glyceroyl phosphate + ADP</text>
        <dbReference type="Rhea" id="RHEA:14801"/>
        <dbReference type="ChEBI" id="CHEBI:30616"/>
        <dbReference type="ChEBI" id="CHEBI:57604"/>
        <dbReference type="ChEBI" id="CHEBI:58272"/>
        <dbReference type="ChEBI" id="CHEBI:456216"/>
        <dbReference type="EC" id="2.7.2.3"/>
    </reaction>
</comment>
<comment type="cofactor">
    <cofactor evidence="1">
        <name>Mg(2+)</name>
        <dbReference type="ChEBI" id="CHEBI:18420"/>
    </cofactor>
</comment>
<comment type="pathway">
    <text>Carbohydrate degradation; glycolysis; pyruvate from D-glyceraldehyde 3-phosphate: step 2/5.</text>
</comment>
<comment type="subunit">
    <text>Monomer.</text>
</comment>
<comment type="subcellular location">
    <subcellularLocation>
        <location>Cytoplasm</location>
    </subcellularLocation>
</comment>
<comment type="developmental stage">
    <text evidence="4">Enriched in the perineurial glia on the surface of the larval central nervous system, neuroepithelial cells of the brain lobes and neuroblasts (at protein level).</text>
</comment>
<comment type="disruption phenotype">
    <text evidence="4">RNAi-mediated knockdown is lethal (PubMed:26235423). Glial-specific RNAi-mediated knockdown is viable but eclosed adults present with locomotor defects (PubMed:26235423). Neuronal-specific RNAi-mediated knockdown is viable with no defects (PubMed:26235423). Conditional RNAi-mediated knockdown in adult glial cells results in reduced lifespan due to neurodegeneration (PubMed:26235423). Conditional RNAi-mediated knockdown in adult neuronal cells has no effect on lifespan (PubMed:26235423).</text>
</comment>
<comment type="similarity">
    <text evidence="5">Belongs to the phosphoglycerate kinase family.</text>
</comment>
<protein>
    <recommendedName>
        <fullName evidence="7">Phosphoglycerate kinase</fullName>
        <ecNumber evidence="1">2.7.2.3</ecNumber>
    </recommendedName>
</protein>
<gene>
    <name evidence="7" type="primary">Pgk</name>
    <name evidence="7" type="ORF">CG3127</name>
</gene>
<feature type="chain" id="PRO_0000145843" description="Phosphoglycerate kinase">
    <location>
        <begin position="1"/>
        <end position="415"/>
    </location>
</feature>
<feature type="binding site" evidence="1">
    <location>
        <position position="22"/>
    </location>
    <ligand>
        <name>(2R)-3-phosphoglycerate</name>
        <dbReference type="ChEBI" id="CHEBI:58272"/>
    </ligand>
</feature>
<feature type="binding site" evidence="2">
    <location>
        <position position="23"/>
    </location>
    <ligand>
        <name>(2R)-3-phosphoglycerate</name>
        <dbReference type="ChEBI" id="CHEBI:58272"/>
    </ligand>
</feature>
<feature type="binding site" evidence="1">
    <location>
        <position position="24"/>
    </location>
    <ligand>
        <name>(2R)-3-phosphoglycerate</name>
        <dbReference type="ChEBI" id="CHEBI:58272"/>
    </ligand>
</feature>
<feature type="binding site" evidence="2">
    <location>
        <position position="25"/>
    </location>
    <ligand>
        <name>(2R)-3-phosphoglycerate</name>
        <dbReference type="ChEBI" id="CHEBI:58272"/>
    </ligand>
</feature>
<feature type="binding site" evidence="1">
    <location>
        <position position="37"/>
    </location>
    <ligand>
        <name>(2R)-3-phosphoglycerate</name>
        <dbReference type="ChEBI" id="CHEBI:58272"/>
    </ligand>
</feature>
<feature type="binding site" evidence="2">
    <location>
        <position position="38"/>
    </location>
    <ligand>
        <name>(2R)-3-phosphoglycerate</name>
        <dbReference type="ChEBI" id="CHEBI:58272"/>
    </ligand>
</feature>
<feature type="binding site" evidence="1">
    <location>
        <position position="61"/>
    </location>
    <ligand>
        <name>(2R)-3-phosphoglycerate</name>
        <dbReference type="ChEBI" id="CHEBI:58272"/>
    </ligand>
</feature>
<feature type="binding site" evidence="2">
    <location>
        <position position="62"/>
    </location>
    <ligand>
        <name>(2R)-3-phosphoglycerate</name>
        <dbReference type="ChEBI" id="CHEBI:58272"/>
    </ligand>
</feature>
<feature type="binding site" evidence="1">
    <location>
        <position position="64"/>
    </location>
    <ligand>
        <name>(2R)-3-phosphoglycerate</name>
        <dbReference type="ChEBI" id="CHEBI:58272"/>
    </ligand>
</feature>
<feature type="binding site" evidence="2">
    <location>
        <position position="65"/>
    </location>
    <ligand>
        <name>(2R)-3-phosphoglycerate</name>
        <dbReference type="ChEBI" id="CHEBI:58272"/>
    </ligand>
</feature>
<feature type="binding site" evidence="2">
    <location>
        <position position="121"/>
    </location>
    <ligand>
        <name>(2R)-3-phosphoglycerate</name>
        <dbReference type="ChEBI" id="CHEBI:58272"/>
    </ligand>
</feature>
<feature type="binding site" evidence="1">
    <location>
        <position position="168"/>
    </location>
    <ligand>
        <name>(2R)-3-phosphoglycerate</name>
        <dbReference type="ChEBI" id="CHEBI:58272"/>
    </ligand>
</feature>
<feature type="binding site" evidence="2">
    <location>
        <position position="169"/>
    </location>
    <ligand>
        <name>(2R)-3-phosphoglycerate</name>
        <dbReference type="ChEBI" id="CHEBI:58272"/>
    </ligand>
</feature>
<feature type="binding site" evidence="1">
    <location>
        <position position="212"/>
    </location>
    <ligand>
        <name>ADP</name>
        <dbReference type="ChEBI" id="CHEBI:456216"/>
    </ligand>
</feature>
<feature type="binding site" evidence="1">
    <location>
        <position position="212"/>
    </location>
    <ligand>
        <name>CDP</name>
        <dbReference type="ChEBI" id="CHEBI:58069"/>
    </ligand>
</feature>
<feature type="binding site" evidence="2">
    <location>
        <position position="213"/>
    </location>
    <ligand>
        <name>AMP</name>
        <dbReference type="ChEBI" id="CHEBI:456215"/>
    </ligand>
</feature>
<feature type="binding site" evidence="2">
    <location>
        <position position="213"/>
    </location>
    <ligand>
        <name>ATP</name>
        <dbReference type="ChEBI" id="CHEBI:30616"/>
    </ligand>
</feature>
<feature type="binding site" evidence="1">
    <location>
        <position position="213"/>
    </location>
    <ligand>
        <name>Mg(2+)</name>
        <dbReference type="ChEBI" id="CHEBI:18420"/>
    </ligand>
</feature>
<feature type="binding site" evidence="2">
    <location>
        <position position="214"/>
    </location>
    <ligand>
        <name>AMP</name>
        <dbReference type="ChEBI" id="CHEBI:456215"/>
    </ligand>
</feature>
<feature type="binding site" evidence="1">
    <location>
        <position position="216"/>
    </location>
    <ligand>
        <name>Mg(2+)</name>
        <dbReference type="ChEBI" id="CHEBI:18420"/>
    </ligand>
</feature>
<feature type="binding site" evidence="1">
    <location>
        <position position="217"/>
    </location>
    <ligand>
        <name>CDP</name>
        <dbReference type="ChEBI" id="CHEBI:58069"/>
    </ligand>
</feature>
<feature type="binding site" evidence="1">
    <location>
        <position position="217"/>
    </location>
    <ligand>
        <name>Mg(2+)</name>
        <dbReference type="ChEBI" id="CHEBI:18420"/>
    </ligand>
</feature>
<feature type="binding site" evidence="2">
    <location>
        <position position="218"/>
    </location>
    <ligand>
        <name>AMP</name>
        <dbReference type="ChEBI" id="CHEBI:456215"/>
    </ligand>
</feature>
<feature type="binding site" evidence="2">
    <location>
        <position position="218"/>
    </location>
    <ligand>
        <name>ATP</name>
        <dbReference type="ChEBI" id="CHEBI:30616"/>
    </ligand>
</feature>
<feature type="binding site" evidence="1">
    <location>
        <position position="236"/>
    </location>
    <ligand>
        <name>ADP</name>
        <dbReference type="ChEBI" id="CHEBI:456216"/>
    </ligand>
</feature>
<feature type="binding site" evidence="1">
    <location>
        <position position="236"/>
    </location>
    <ligand>
        <name>CDP</name>
        <dbReference type="ChEBI" id="CHEBI:58069"/>
    </ligand>
</feature>
<feature type="binding site" evidence="2">
    <location>
        <position position="237"/>
    </location>
    <ligand>
        <name>AMP</name>
        <dbReference type="ChEBI" id="CHEBI:456215"/>
    </ligand>
</feature>
<feature type="binding site" evidence="2">
    <location>
        <position position="237"/>
    </location>
    <ligand>
        <name>ATP</name>
        <dbReference type="ChEBI" id="CHEBI:30616"/>
    </ligand>
</feature>
<feature type="binding site" evidence="2">
    <location>
        <position position="311"/>
    </location>
    <ligand>
        <name>AMP</name>
        <dbReference type="ChEBI" id="CHEBI:456215"/>
    </ligand>
</feature>
<feature type="binding site" evidence="2">
    <location>
        <position position="311"/>
    </location>
    <ligand>
        <name>ATP</name>
        <dbReference type="ChEBI" id="CHEBI:30616"/>
    </ligand>
</feature>
<feature type="binding site" evidence="1">
    <location>
        <position position="336"/>
    </location>
    <ligand>
        <name>CDP</name>
        <dbReference type="ChEBI" id="CHEBI:58069"/>
    </ligand>
</feature>
<feature type="binding site" evidence="1">
    <location>
        <position position="341"/>
    </location>
    <ligand>
        <name>ADP</name>
        <dbReference type="ChEBI" id="CHEBI:456216"/>
    </ligand>
</feature>
<feature type="binding site" evidence="1">
    <location>
        <position position="341"/>
    </location>
    <ligand>
        <name>CDP</name>
        <dbReference type="ChEBI" id="CHEBI:58069"/>
    </ligand>
</feature>
<feature type="binding site" evidence="2">
    <location>
        <position position="342"/>
    </location>
    <ligand>
        <name>AMP</name>
        <dbReference type="ChEBI" id="CHEBI:456215"/>
    </ligand>
</feature>
<feature type="binding site" evidence="2">
    <location>
        <position position="342"/>
    </location>
    <ligand>
        <name>ATP</name>
        <dbReference type="ChEBI" id="CHEBI:30616"/>
    </ligand>
</feature>
<feature type="binding site" evidence="2">
    <location>
        <position position="373"/>
    </location>
    <ligand>
        <name>ATP</name>
        <dbReference type="ChEBI" id="CHEBI:30616"/>
    </ligand>
</feature>
<feature type="binding site" evidence="2">
    <location>
        <position position="373"/>
    </location>
    <ligand>
        <name>Mg(2+)</name>
        <dbReference type="ChEBI" id="CHEBI:18420"/>
    </ligand>
</feature>
<feature type="binding site" evidence="2">
    <location>
        <position position="374"/>
    </location>
    <ligand>
        <name>ATP</name>
        <dbReference type="ChEBI" id="CHEBI:30616"/>
    </ligand>
</feature>
<feature type="sequence variant" description="In strain: HFL97_3e2." evidence="3">
    <original>S</original>
    <variation>A</variation>
    <location>
        <position position="388"/>
    </location>
</feature>
<feature type="sequence conflict" description="In Ref. 1; CAA78404." evidence="5" ref="1">
    <original>A</original>
    <variation>R</variation>
    <location>
        <position position="410"/>
    </location>
</feature>
<sequence>MAFNKLSIENLDLAGKRVLMRVDFNVPIKEGKITSNQRIVAALDSIKLALSKKAKSVVLMSHLGRPDGNKNIKYTLAPVAAELKTLLGQDVIFLSDCVGSEVEAACKDPAPGSVILLENVRFYVEEEGKGLDASGGKVKADPAKVKEFRASLAKLGDVYVNDAFGTAHRAHSSMMGDGFEQRAAGLLLNKELKYFSQALDKPPNPFLAILGGAKVADKIQLIENLLDKVNEMIIGGGMAFTFLKVLNNMKIGGSLFDEEGSKIVEKLVEKAKKNNVQLHLPVDFVCGDKFAENAAVSEATVEAGIPDGHMGLDVGPKTRELFAAPIARAKLIVWNGPPGVFEFPNFANGTKSIMDGVVAATKNGTVSIIGGGDTASCCAKWNTEALVSHVSTGGGASLELLEGKTLPGVAALTSA</sequence>
<keyword id="KW-0067">ATP-binding</keyword>
<keyword id="KW-0963">Cytoplasm</keyword>
<keyword id="KW-0324">Glycolysis</keyword>
<keyword id="KW-0418">Kinase</keyword>
<keyword id="KW-0460">Magnesium</keyword>
<keyword id="KW-0479">Metal-binding</keyword>
<keyword id="KW-0547">Nucleotide-binding</keyword>
<keyword id="KW-1185">Reference proteome</keyword>
<keyword id="KW-0808">Transferase</keyword>
<reference key="1">
    <citation type="journal article" date="1992" name="Mol. Gen. Genet.">
        <title>Structure and expression of the phosphoglycerate kinase (Pgk) gene of Drosophila melanogaster.</title>
        <authorList>
            <person name="Roselli-Rehfuss L."/>
            <person name="Ye F."/>
            <person name="Lissemore J.L."/>
            <person name="Sullivan D.T."/>
        </authorList>
    </citation>
    <scope>NUCLEOTIDE SEQUENCE [GENOMIC DNA]</scope>
    <source>
        <strain>Oregon-R</strain>
    </source>
</reference>
<reference key="2">
    <citation type="journal article" date="2007" name="Mol. Biol. Evol.">
        <title>Adaptive evolution of metabolic pathways in Drosophila.</title>
        <authorList>
            <person name="Flowers J."/>
            <person name="Sezgin E."/>
            <person name="Kumagai S."/>
            <person name="Duvernell D."/>
            <person name="Matzkin L."/>
            <person name="Schmidt P."/>
            <person name="Eanes W."/>
        </authorList>
    </citation>
    <scope>NUCLEOTIDE SEQUENCE [GENOMIC DNA]</scope>
    <scope>VARIANT ALA-388</scope>
    <source>
        <strain>DPF96_10</strain>
        <strain>DPF96_26</strain>
        <strain>DPF96_5.1</strain>
        <strain>DPF96_8.3</strain>
        <strain>HFL97_15e</strain>
        <strain>HFL97_23e</strain>
        <strain>HFL97_3e2</strain>
        <strain>HFL97_61e</strain>
        <strain>HFL97_68e</strain>
        <strain>MA96_24.2</strain>
        <strain>MA96_26.4</strain>
        <strain>MA96_3.5</strain>
        <strain>MA96_4.4</strain>
        <strain>MA96_40.1</strain>
        <strain>MA96_42.4</strain>
        <strain>MA96_49.2</strain>
        <strain>MA96_9.3</strain>
        <strain>Z(H)_26e2</strain>
        <strain>Z(H)_28e2</strain>
        <strain>Z(H)_36e2</strain>
        <strain>Z(H)_38e2</strain>
        <strain>Z(H)_44e2</strain>
        <strain>Z(S)_11e2</strain>
        <strain>Z(S)_28e2</strain>
        <strain>Z(S)_49e2</strain>
    </source>
</reference>
<reference key="3">
    <citation type="journal article" date="2000" name="Science">
        <title>The genome sequence of Drosophila melanogaster.</title>
        <authorList>
            <person name="Adams M.D."/>
            <person name="Celniker S.E."/>
            <person name="Holt R.A."/>
            <person name="Evans C.A."/>
            <person name="Gocayne J.D."/>
            <person name="Amanatides P.G."/>
            <person name="Scherer S.E."/>
            <person name="Li P.W."/>
            <person name="Hoskins R.A."/>
            <person name="Galle R.F."/>
            <person name="George R.A."/>
            <person name="Lewis S.E."/>
            <person name="Richards S."/>
            <person name="Ashburner M."/>
            <person name="Henderson S.N."/>
            <person name="Sutton G.G."/>
            <person name="Wortman J.R."/>
            <person name="Yandell M.D."/>
            <person name="Zhang Q."/>
            <person name="Chen L.X."/>
            <person name="Brandon R.C."/>
            <person name="Rogers Y.-H.C."/>
            <person name="Blazej R.G."/>
            <person name="Champe M."/>
            <person name="Pfeiffer B.D."/>
            <person name="Wan K.H."/>
            <person name="Doyle C."/>
            <person name="Baxter E.G."/>
            <person name="Helt G."/>
            <person name="Nelson C.R."/>
            <person name="Miklos G.L.G."/>
            <person name="Abril J.F."/>
            <person name="Agbayani A."/>
            <person name="An H.-J."/>
            <person name="Andrews-Pfannkoch C."/>
            <person name="Baldwin D."/>
            <person name="Ballew R.M."/>
            <person name="Basu A."/>
            <person name="Baxendale J."/>
            <person name="Bayraktaroglu L."/>
            <person name="Beasley E.M."/>
            <person name="Beeson K.Y."/>
            <person name="Benos P.V."/>
            <person name="Berman B.P."/>
            <person name="Bhandari D."/>
            <person name="Bolshakov S."/>
            <person name="Borkova D."/>
            <person name="Botchan M.R."/>
            <person name="Bouck J."/>
            <person name="Brokstein P."/>
            <person name="Brottier P."/>
            <person name="Burtis K.C."/>
            <person name="Busam D.A."/>
            <person name="Butler H."/>
            <person name="Cadieu E."/>
            <person name="Center A."/>
            <person name="Chandra I."/>
            <person name="Cherry J.M."/>
            <person name="Cawley S."/>
            <person name="Dahlke C."/>
            <person name="Davenport L.B."/>
            <person name="Davies P."/>
            <person name="de Pablos B."/>
            <person name="Delcher A."/>
            <person name="Deng Z."/>
            <person name="Mays A.D."/>
            <person name="Dew I."/>
            <person name="Dietz S.M."/>
            <person name="Dodson K."/>
            <person name="Doup L.E."/>
            <person name="Downes M."/>
            <person name="Dugan-Rocha S."/>
            <person name="Dunkov B.C."/>
            <person name="Dunn P."/>
            <person name="Durbin K.J."/>
            <person name="Evangelista C.C."/>
            <person name="Ferraz C."/>
            <person name="Ferriera S."/>
            <person name="Fleischmann W."/>
            <person name="Fosler C."/>
            <person name="Gabrielian A.E."/>
            <person name="Garg N.S."/>
            <person name="Gelbart W.M."/>
            <person name="Glasser K."/>
            <person name="Glodek A."/>
            <person name="Gong F."/>
            <person name="Gorrell J.H."/>
            <person name="Gu Z."/>
            <person name="Guan P."/>
            <person name="Harris M."/>
            <person name="Harris N.L."/>
            <person name="Harvey D.A."/>
            <person name="Heiman T.J."/>
            <person name="Hernandez J.R."/>
            <person name="Houck J."/>
            <person name="Hostin D."/>
            <person name="Houston K.A."/>
            <person name="Howland T.J."/>
            <person name="Wei M.-H."/>
            <person name="Ibegwam C."/>
            <person name="Jalali M."/>
            <person name="Kalush F."/>
            <person name="Karpen G.H."/>
            <person name="Ke Z."/>
            <person name="Kennison J.A."/>
            <person name="Ketchum K.A."/>
            <person name="Kimmel B.E."/>
            <person name="Kodira C.D."/>
            <person name="Kraft C.L."/>
            <person name="Kravitz S."/>
            <person name="Kulp D."/>
            <person name="Lai Z."/>
            <person name="Lasko P."/>
            <person name="Lei Y."/>
            <person name="Levitsky A.A."/>
            <person name="Li J.H."/>
            <person name="Li Z."/>
            <person name="Liang Y."/>
            <person name="Lin X."/>
            <person name="Liu X."/>
            <person name="Mattei B."/>
            <person name="McIntosh T.C."/>
            <person name="McLeod M.P."/>
            <person name="McPherson D."/>
            <person name="Merkulov G."/>
            <person name="Milshina N.V."/>
            <person name="Mobarry C."/>
            <person name="Morris J."/>
            <person name="Moshrefi A."/>
            <person name="Mount S.M."/>
            <person name="Moy M."/>
            <person name="Murphy B."/>
            <person name="Murphy L."/>
            <person name="Muzny D.M."/>
            <person name="Nelson D.L."/>
            <person name="Nelson D.R."/>
            <person name="Nelson K.A."/>
            <person name="Nixon K."/>
            <person name="Nusskern D.R."/>
            <person name="Pacleb J.M."/>
            <person name="Palazzolo M."/>
            <person name="Pittman G.S."/>
            <person name="Pan S."/>
            <person name="Pollard J."/>
            <person name="Puri V."/>
            <person name="Reese M.G."/>
            <person name="Reinert K."/>
            <person name="Remington K."/>
            <person name="Saunders R.D.C."/>
            <person name="Scheeler F."/>
            <person name="Shen H."/>
            <person name="Shue B.C."/>
            <person name="Siden-Kiamos I."/>
            <person name="Simpson M."/>
            <person name="Skupski M.P."/>
            <person name="Smith T.J."/>
            <person name="Spier E."/>
            <person name="Spradling A.C."/>
            <person name="Stapleton M."/>
            <person name="Strong R."/>
            <person name="Sun E."/>
            <person name="Svirskas R."/>
            <person name="Tector C."/>
            <person name="Turner R."/>
            <person name="Venter E."/>
            <person name="Wang A.H."/>
            <person name="Wang X."/>
            <person name="Wang Z.-Y."/>
            <person name="Wassarman D.A."/>
            <person name="Weinstock G.M."/>
            <person name="Weissenbach J."/>
            <person name="Williams S.M."/>
            <person name="Woodage T."/>
            <person name="Worley K.C."/>
            <person name="Wu D."/>
            <person name="Yang S."/>
            <person name="Yao Q.A."/>
            <person name="Ye J."/>
            <person name="Yeh R.-F."/>
            <person name="Zaveri J.S."/>
            <person name="Zhan M."/>
            <person name="Zhang G."/>
            <person name="Zhao Q."/>
            <person name="Zheng L."/>
            <person name="Zheng X.H."/>
            <person name="Zhong F.N."/>
            <person name="Zhong W."/>
            <person name="Zhou X."/>
            <person name="Zhu S.C."/>
            <person name="Zhu X."/>
            <person name="Smith H.O."/>
            <person name="Gibbs R.A."/>
            <person name="Myers E.W."/>
            <person name="Rubin G.M."/>
            <person name="Venter J.C."/>
        </authorList>
    </citation>
    <scope>NUCLEOTIDE SEQUENCE [LARGE SCALE GENOMIC DNA]</scope>
    <source>
        <strain>Berkeley</strain>
    </source>
</reference>
<reference key="4">
    <citation type="journal article" date="2002" name="Genome Biol.">
        <title>Annotation of the Drosophila melanogaster euchromatic genome: a systematic review.</title>
        <authorList>
            <person name="Misra S."/>
            <person name="Crosby M.A."/>
            <person name="Mungall C.J."/>
            <person name="Matthews B.B."/>
            <person name="Campbell K.S."/>
            <person name="Hradecky P."/>
            <person name="Huang Y."/>
            <person name="Kaminker J.S."/>
            <person name="Millburn G.H."/>
            <person name="Prochnik S.E."/>
            <person name="Smith C.D."/>
            <person name="Tupy J.L."/>
            <person name="Whitfield E.J."/>
            <person name="Bayraktaroglu L."/>
            <person name="Berman B.P."/>
            <person name="Bettencourt B.R."/>
            <person name="Celniker S.E."/>
            <person name="de Grey A.D.N.J."/>
            <person name="Drysdale R.A."/>
            <person name="Harris N.L."/>
            <person name="Richter J."/>
            <person name="Russo S."/>
            <person name="Schroeder A.J."/>
            <person name="Shu S.Q."/>
            <person name="Stapleton M."/>
            <person name="Yamada C."/>
            <person name="Ashburner M."/>
            <person name="Gelbart W.M."/>
            <person name="Rubin G.M."/>
            <person name="Lewis S.E."/>
        </authorList>
    </citation>
    <scope>GENOME REANNOTATION</scope>
    <source>
        <strain>Berkeley</strain>
    </source>
</reference>
<reference key="5">
    <citation type="submission" date="2006-11" db="EMBL/GenBank/DDBJ databases">
        <authorList>
            <person name="Stapleton M."/>
            <person name="Carlson J.W."/>
            <person name="Frise E."/>
            <person name="Kapadia B."/>
            <person name="Park S."/>
            <person name="Wan K.H."/>
            <person name="Yu C."/>
            <person name="Celniker S.E."/>
        </authorList>
    </citation>
    <scope>NUCLEOTIDE SEQUENCE [LARGE SCALE MRNA]</scope>
    <source>
        <strain>Berkeley</strain>
        <tissue>Head</tissue>
    </source>
</reference>
<reference key="6">
    <citation type="journal article" date="2015" name="Cell Metab.">
        <title>Glial Glycolysis Is Essential for Neuronal Survival in Drosophila.</title>
        <authorList>
            <person name="Volkenhoff A."/>
            <person name="Weiler A."/>
            <person name="Letzel M."/>
            <person name="Stehling M."/>
            <person name="Klaembt C."/>
            <person name="Schirmeier S."/>
        </authorList>
    </citation>
    <scope>FUNCTION</scope>
    <scope>DEVELOPMENTAL STAGE</scope>
    <scope>DISRUPTION PHENOTYPE</scope>
</reference>